<protein>
    <recommendedName>
        <fullName evidence="1">Elongation factor Ts</fullName>
        <shortName evidence="1">EF-Ts</shortName>
    </recommendedName>
</protein>
<accession>A7INR5</accession>
<sequence length="307" mass="31940">MAAITAGLVKELRDKTGAGMMDCKSALTETNGDIEAAIDWLRKKGLAKAAKKAGRVAAEGLVAVESSGHYAAAIEVNAETDFVARNPDFQAFVREAAKVALNTDGTVEAVAAAKFPGESVTVAERLTALIATIGENMTLRRSAKLSVSAGVIASYVHGAVVEGQGRIGVLVALESTGDVEKLSTLGRQIAMHIAALNPLALDASGISEETIAREKAILLEKHQGKPANVQDKIAESGIKSFFKEVTLLDQAFVHDGSKSVSQVLKEAEGQVGAPLKLTGFVRFALGEGIEKEETDFAAEVAAAAGQS</sequence>
<evidence type="ECO:0000255" key="1">
    <source>
        <dbReference type="HAMAP-Rule" id="MF_00050"/>
    </source>
</evidence>
<comment type="function">
    <text evidence="1">Associates with the EF-Tu.GDP complex and induces the exchange of GDP to GTP. It remains bound to the aminoacyl-tRNA.EF-Tu.GTP complex up to the GTP hydrolysis stage on the ribosome.</text>
</comment>
<comment type="subcellular location">
    <subcellularLocation>
        <location evidence="1">Cytoplasm</location>
    </subcellularLocation>
</comment>
<comment type="similarity">
    <text evidence="1">Belongs to the EF-Ts family.</text>
</comment>
<keyword id="KW-0963">Cytoplasm</keyword>
<keyword id="KW-0251">Elongation factor</keyword>
<keyword id="KW-0648">Protein biosynthesis</keyword>
<keyword id="KW-1185">Reference proteome</keyword>
<name>EFTS_XANP2</name>
<feature type="chain" id="PRO_1000189904" description="Elongation factor Ts">
    <location>
        <begin position="1"/>
        <end position="307"/>
    </location>
</feature>
<feature type="region of interest" description="Involved in Mg(2+) ion dislocation from EF-Tu" evidence="1">
    <location>
        <begin position="80"/>
        <end position="83"/>
    </location>
</feature>
<gene>
    <name evidence="1" type="primary">tsf</name>
    <name type="ordered locus">Xaut_4438</name>
</gene>
<proteinExistence type="inferred from homology"/>
<reference key="1">
    <citation type="submission" date="2007-07" db="EMBL/GenBank/DDBJ databases">
        <title>Complete sequence of chromosome of Xanthobacter autotrophicus Py2.</title>
        <authorList>
            <consortium name="US DOE Joint Genome Institute"/>
            <person name="Copeland A."/>
            <person name="Lucas S."/>
            <person name="Lapidus A."/>
            <person name="Barry K."/>
            <person name="Glavina del Rio T."/>
            <person name="Hammon N."/>
            <person name="Israni S."/>
            <person name="Dalin E."/>
            <person name="Tice H."/>
            <person name="Pitluck S."/>
            <person name="Sims D."/>
            <person name="Brettin T."/>
            <person name="Bruce D."/>
            <person name="Detter J.C."/>
            <person name="Han C."/>
            <person name="Tapia R."/>
            <person name="Brainard J."/>
            <person name="Schmutz J."/>
            <person name="Larimer F."/>
            <person name="Land M."/>
            <person name="Hauser L."/>
            <person name="Kyrpides N."/>
            <person name="Kim E."/>
            <person name="Ensigns S.A."/>
            <person name="Richardson P."/>
        </authorList>
    </citation>
    <scope>NUCLEOTIDE SEQUENCE [LARGE SCALE GENOMIC DNA]</scope>
    <source>
        <strain>ATCC BAA-1158 / Py2</strain>
    </source>
</reference>
<organism>
    <name type="scientific">Xanthobacter autotrophicus (strain ATCC BAA-1158 / Py2)</name>
    <dbReference type="NCBI Taxonomy" id="78245"/>
    <lineage>
        <taxon>Bacteria</taxon>
        <taxon>Pseudomonadati</taxon>
        <taxon>Pseudomonadota</taxon>
        <taxon>Alphaproteobacteria</taxon>
        <taxon>Hyphomicrobiales</taxon>
        <taxon>Xanthobacteraceae</taxon>
        <taxon>Xanthobacter</taxon>
    </lineage>
</organism>
<dbReference type="EMBL" id="CP000781">
    <property type="protein sequence ID" value="ABS69659.1"/>
    <property type="molecule type" value="Genomic_DNA"/>
</dbReference>
<dbReference type="SMR" id="A7INR5"/>
<dbReference type="STRING" id="78245.Xaut_4438"/>
<dbReference type="KEGG" id="xau:Xaut_4438"/>
<dbReference type="eggNOG" id="COG0264">
    <property type="taxonomic scope" value="Bacteria"/>
</dbReference>
<dbReference type="HOGENOM" id="CLU_047155_2_0_5"/>
<dbReference type="OrthoDB" id="9808348at2"/>
<dbReference type="PhylomeDB" id="A7INR5"/>
<dbReference type="Proteomes" id="UP000002417">
    <property type="component" value="Chromosome"/>
</dbReference>
<dbReference type="GO" id="GO:0005737">
    <property type="term" value="C:cytoplasm"/>
    <property type="evidence" value="ECO:0007669"/>
    <property type="project" value="UniProtKB-SubCell"/>
</dbReference>
<dbReference type="GO" id="GO:0003746">
    <property type="term" value="F:translation elongation factor activity"/>
    <property type="evidence" value="ECO:0007669"/>
    <property type="project" value="UniProtKB-UniRule"/>
</dbReference>
<dbReference type="CDD" id="cd14275">
    <property type="entry name" value="UBA_EF-Ts"/>
    <property type="match status" value="1"/>
</dbReference>
<dbReference type="FunFam" id="1.10.8.10:FF:000001">
    <property type="entry name" value="Elongation factor Ts"/>
    <property type="match status" value="1"/>
</dbReference>
<dbReference type="Gene3D" id="1.10.286.20">
    <property type="match status" value="1"/>
</dbReference>
<dbReference type="Gene3D" id="1.10.8.10">
    <property type="entry name" value="DNA helicase RuvA subunit, C-terminal domain"/>
    <property type="match status" value="1"/>
</dbReference>
<dbReference type="Gene3D" id="3.30.479.20">
    <property type="entry name" value="Elongation factor Ts, dimerisation domain"/>
    <property type="match status" value="2"/>
</dbReference>
<dbReference type="HAMAP" id="MF_00050">
    <property type="entry name" value="EF_Ts"/>
    <property type="match status" value="1"/>
</dbReference>
<dbReference type="InterPro" id="IPR036402">
    <property type="entry name" value="EF-Ts_dimer_sf"/>
</dbReference>
<dbReference type="InterPro" id="IPR001816">
    <property type="entry name" value="Transl_elong_EFTs/EF1B"/>
</dbReference>
<dbReference type="InterPro" id="IPR014039">
    <property type="entry name" value="Transl_elong_EFTs/EF1B_dimer"/>
</dbReference>
<dbReference type="InterPro" id="IPR018101">
    <property type="entry name" value="Transl_elong_Ts_CS"/>
</dbReference>
<dbReference type="InterPro" id="IPR009060">
    <property type="entry name" value="UBA-like_sf"/>
</dbReference>
<dbReference type="NCBIfam" id="TIGR00116">
    <property type="entry name" value="tsf"/>
    <property type="match status" value="1"/>
</dbReference>
<dbReference type="PANTHER" id="PTHR11741">
    <property type="entry name" value="ELONGATION FACTOR TS"/>
    <property type="match status" value="1"/>
</dbReference>
<dbReference type="PANTHER" id="PTHR11741:SF0">
    <property type="entry name" value="ELONGATION FACTOR TS, MITOCHONDRIAL"/>
    <property type="match status" value="1"/>
</dbReference>
<dbReference type="Pfam" id="PF00889">
    <property type="entry name" value="EF_TS"/>
    <property type="match status" value="1"/>
</dbReference>
<dbReference type="SUPFAM" id="SSF54713">
    <property type="entry name" value="Elongation factor Ts (EF-Ts), dimerisation domain"/>
    <property type="match status" value="2"/>
</dbReference>
<dbReference type="SUPFAM" id="SSF46934">
    <property type="entry name" value="UBA-like"/>
    <property type="match status" value="1"/>
</dbReference>
<dbReference type="PROSITE" id="PS01126">
    <property type="entry name" value="EF_TS_1"/>
    <property type="match status" value="1"/>
</dbReference>
<dbReference type="PROSITE" id="PS01127">
    <property type="entry name" value="EF_TS_2"/>
    <property type="match status" value="1"/>
</dbReference>